<gene>
    <name evidence="1" type="primary">accD</name>
    <name type="synonym">zfpA</name>
    <name type="ordered locus">sll0336</name>
</gene>
<protein>
    <recommendedName>
        <fullName evidence="1">Acetyl-coenzyme A carboxylase carboxyl transferase subunit beta</fullName>
        <shortName evidence="1">ACCase subunit beta</shortName>
        <shortName evidence="1">Acetyl-CoA carboxylase carboxyltransferase subunit beta</shortName>
        <ecNumber evidence="1">2.1.3.15</ecNumber>
    </recommendedName>
</protein>
<reference key="1">
    <citation type="journal article" date="1991" name="Agric. Biol. Chem.">
        <title>Gene encoding a putative zinc finger protein in Synechocystis PCC6803.</title>
        <authorList>
            <person name="Ogura Y."/>
            <person name="Yoshida T."/>
            <person name="Nakamura Y."/>
            <person name="Takemura M."/>
            <person name="Oda K."/>
            <person name="Ohyama K."/>
        </authorList>
    </citation>
    <scope>NUCLEOTIDE SEQUENCE [GENOMIC DNA]</scope>
</reference>
<reference key="2">
    <citation type="journal article" date="1995" name="DNA Res.">
        <title>Sequence analysis of the genome of the unicellular cyanobacterium Synechocystis sp. strain PCC6803. I. Sequence features in the 1 Mb region from map positions 64% to 92% of the genome.</title>
        <authorList>
            <person name="Kaneko T."/>
            <person name="Tanaka A."/>
            <person name="Sato S."/>
            <person name="Kotani H."/>
            <person name="Sazuka T."/>
            <person name="Miyajima N."/>
            <person name="Sugiura M."/>
            <person name="Tabata S."/>
        </authorList>
    </citation>
    <scope>NUCLEOTIDE SEQUENCE [LARGE SCALE GENOMIC DNA]</scope>
    <source>
        <strain>ATCC 27184 / PCC 6803 / N-1</strain>
    </source>
</reference>
<reference key="3">
    <citation type="journal article" date="1996" name="DNA Res.">
        <title>Sequence analysis of the genome of the unicellular cyanobacterium Synechocystis sp. strain PCC6803. II. Sequence determination of the entire genome and assignment of potential protein-coding regions.</title>
        <authorList>
            <person name="Kaneko T."/>
            <person name="Sato S."/>
            <person name="Kotani H."/>
            <person name="Tanaka A."/>
            <person name="Asamizu E."/>
            <person name="Nakamura Y."/>
            <person name="Miyajima N."/>
            <person name="Hirosawa M."/>
            <person name="Sugiura M."/>
            <person name="Sasamoto S."/>
            <person name="Kimura T."/>
            <person name="Hosouchi T."/>
            <person name="Matsuno A."/>
            <person name="Muraki A."/>
            <person name="Nakazaki N."/>
            <person name="Naruo K."/>
            <person name="Okumura S."/>
            <person name="Shimpo S."/>
            <person name="Takeuchi C."/>
            <person name="Wada T."/>
            <person name="Watanabe A."/>
            <person name="Yamada M."/>
            <person name="Yasuda M."/>
            <person name="Tabata S."/>
        </authorList>
    </citation>
    <scope>NUCLEOTIDE SEQUENCE [LARGE SCALE GENOMIC DNA]</scope>
    <source>
        <strain>ATCC 27184 / PCC 6803 / Kazusa</strain>
    </source>
</reference>
<evidence type="ECO:0000255" key="1">
    <source>
        <dbReference type="HAMAP-Rule" id="MF_01395"/>
    </source>
</evidence>
<evidence type="ECO:0000255" key="2">
    <source>
        <dbReference type="PROSITE-ProRule" id="PRU01136"/>
    </source>
</evidence>
<name>ACCD_SYNY3</name>
<organism>
    <name type="scientific">Synechocystis sp. (strain ATCC 27184 / PCC 6803 / Kazusa)</name>
    <dbReference type="NCBI Taxonomy" id="1111708"/>
    <lineage>
        <taxon>Bacteria</taxon>
        <taxon>Bacillati</taxon>
        <taxon>Cyanobacteriota</taxon>
        <taxon>Cyanophyceae</taxon>
        <taxon>Synechococcales</taxon>
        <taxon>Merismopediaceae</taxon>
        <taxon>Synechocystis</taxon>
    </lineage>
</organism>
<accession>Q57417</accession>
<proteinExistence type="inferred from homology"/>
<keyword id="KW-0067">ATP-binding</keyword>
<keyword id="KW-0963">Cytoplasm</keyword>
<keyword id="KW-0275">Fatty acid biosynthesis</keyword>
<keyword id="KW-0276">Fatty acid metabolism</keyword>
<keyword id="KW-0444">Lipid biosynthesis</keyword>
<keyword id="KW-0443">Lipid metabolism</keyword>
<keyword id="KW-0479">Metal-binding</keyword>
<keyword id="KW-0547">Nucleotide-binding</keyword>
<keyword id="KW-1185">Reference proteome</keyword>
<keyword id="KW-0808">Transferase</keyword>
<keyword id="KW-0862">Zinc</keyword>
<keyword id="KW-0863">Zinc-finger</keyword>
<dbReference type="EC" id="2.1.3.15" evidence="1"/>
<dbReference type="EMBL" id="D10004">
    <property type="protein sequence ID" value="BAA00893.1"/>
    <property type="molecule type" value="Genomic_DNA"/>
</dbReference>
<dbReference type="EMBL" id="S77740">
    <property type="protein sequence ID" value="AAC60398.1"/>
    <property type="molecule type" value="Genomic_DNA"/>
</dbReference>
<dbReference type="EMBL" id="BA000022">
    <property type="protein sequence ID" value="BAA10092.1"/>
    <property type="molecule type" value="Genomic_DNA"/>
</dbReference>
<dbReference type="PIR" id="JQ1238">
    <property type="entry name" value="JQ1238"/>
</dbReference>
<dbReference type="SMR" id="Q57417"/>
<dbReference type="FunCoup" id="Q57417">
    <property type="interactions" value="240"/>
</dbReference>
<dbReference type="IntAct" id="Q57417">
    <property type="interactions" value="4"/>
</dbReference>
<dbReference type="STRING" id="1148.gene:10499584"/>
<dbReference type="PaxDb" id="1148-1001466"/>
<dbReference type="EnsemblBacteria" id="BAA10092">
    <property type="protein sequence ID" value="BAA10092"/>
    <property type="gene ID" value="BAA10092"/>
</dbReference>
<dbReference type="KEGG" id="syn:sll0336"/>
<dbReference type="eggNOG" id="COG0777">
    <property type="taxonomic scope" value="Bacteria"/>
</dbReference>
<dbReference type="InParanoid" id="Q57417"/>
<dbReference type="PhylomeDB" id="Q57417"/>
<dbReference type="UniPathway" id="UPA00655">
    <property type="reaction ID" value="UER00711"/>
</dbReference>
<dbReference type="Proteomes" id="UP000001425">
    <property type="component" value="Chromosome"/>
</dbReference>
<dbReference type="GO" id="GO:0009317">
    <property type="term" value="C:acetyl-CoA carboxylase complex"/>
    <property type="evidence" value="ECO:0007669"/>
    <property type="project" value="InterPro"/>
</dbReference>
<dbReference type="GO" id="GO:0003989">
    <property type="term" value="F:acetyl-CoA carboxylase activity"/>
    <property type="evidence" value="ECO:0007669"/>
    <property type="project" value="InterPro"/>
</dbReference>
<dbReference type="GO" id="GO:0005524">
    <property type="term" value="F:ATP binding"/>
    <property type="evidence" value="ECO:0007669"/>
    <property type="project" value="UniProtKB-KW"/>
</dbReference>
<dbReference type="GO" id="GO:0016743">
    <property type="term" value="F:carboxyl- or carbamoyltransferase activity"/>
    <property type="evidence" value="ECO:0007669"/>
    <property type="project" value="UniProtKB-UniRule"/>
</dbReference>
<dbReference type="GO" id="GO:0008270">
    <property type="term" value="F:zinc ion binding"/>
    <property type="evidence" value="ECO:0007669"/>
    <property type="project" value="UniProtKB-UniRule"/>
</dbReference>
<dbReference type="GO" id="GO:0006633">
    <property type="term" value="P:fatty acid biosynthetic process"/>
    <property type="evidence" value="ECO:0000318"/>
    <property type="project" value="GO_Central"/>
</dbReference>
<dbReference type="GO" id="GO:2001295">
    <property type="term" value="P:malonyl-CoA biosynthetic process"/>
    <property type="evidence" value="ECO:0007669"/>
    <property type="project" value="UniProtKB-UniRule"/>
</dbReference>
<dbReference type="Gene3D" id="3.90.226.10">
    <property type="entry name" value="2-enoyl-CoA Hydratase, Chain A, domain 1"/>
    <property type="match status" value="1"/>
</dbReference>
<dbReference type="HAMAP" id="MF_01395">
    <property type="entry name" value="AcetylCoA_CT_beta"/>
    <property type="match status" value="1"/>
</dbReference>
<dbReference type="InterPro" id="IPR034733">
    <property type="entry name" value="AcCoA_carboxyl_beta"/>
</dbReference>
<dbReference type="InterPro" id="IPR000438">
    <property type="entry name" value="Acetyl_CoA_COase_Trfase_b_su"/>
</dbReference>
<dbReference type="InterPro" id="IPR029045">
    <property type="entry name" value="ClpP/crotonase-like_dom_sf"/>
</dbReference>
<dbReference type="InterPro" id="IPR011762">
    <property type="entry name" value="COA_CT_N"/>
</dbReference>
<dbReference type="InterPro" id="IPR041010">
    <property type="entry name" value="Znf-ACC"/>
</dbReference>
<dbReference type="NCBIfam" id="TIGR00515">
    <property type="entry name" value="accD"/>
    <property type="match status" value="1"/>
</dbReference>
<dbReference type="PANTHER" id="PTHR42995">
    <property type="entry name" value="ACETYL-COENZYME A CARBOXYLASE CARBOXYL TRANSFERASE SUBUNIT BETA, CHLOROPLASTIC"/>
    <property type="match status" value="1"/>
</dbReference>
<dbReference type="PANTHER" id="PTHR42995:SF5">
    <property type="entry name" value="ACETYL-COENZYME A CARBOXYLASE CARBOXYL TRANSFERASE SUBUNIT BETA, CHLOROPLASTIC"/>
    <property type="match status" value="1"/>
</dbReference>
<dbReference type="Pfam" id="PF01039">
    <property type="entry name" value="Carboxyl_trans"/>
    <property type="match status" value="1"/>
</dbReference>
<dbReference type="Pfam" id="PF17848">
    <property type="entry name" value="Zn_ribbon_ACC"/>
    <property type="match status" value="1"/>
</dbReference>
<dbReference type="PRINTS" id="PR01070">
    <property type="entry name" value="ACCCTRFRASEB"/>
</dbReference>
<dbReference type="SUPFAM" id="SSF52096">
    <property type="entry name" value="ClpP/crotonase"/>
    <property type="match status" value="1"/>
</dbReference>
<dbReference type="PROSITE" id="PS50980">
    <property type="entry name" value="COA_CT_NTER"/>
    <property type="match status" value="1"/>
</dbReference>
<comment type="function">
    <text evidence="1">Component of the acetyl coenzyme A carboxylase (ACC) complex. Biotin carboxylase (BC) catalyzes the carboxylation of biotin on its carrier protein (BCCP) and then the CO(2) group is transferred by the transcarboxylase to acetyl-CoA to form malonyl-CoA.</text>
</comment>
<comment type="catalytic activity">
    <reaction evidence="1">
        <text>N(6)-carboxybiotinyl-L-lysyl-[protein] + acetyl-CoA = N(6)-biotinyl-L-lysyl-[protein] + malonyl-CoA</text>
        <dbReference type="Rhea" id="RHEA:54728"/>
        <dbReference type="Rhea" id="RHEA-COMP:10505"/>
        <dbReference type="Rhea" id="RHEA-COMP:10506"/>
        <dbReference type="ChEBI" id="CHEBI:57288"/>
        <dbReference type="ChEBI" id="CHEBI:57384"/>
        <dbReference type="ChEBI" id="CHEBI:83144"/>
        <dbReference type="ChEBI" id="CHEBI:83145"/>
        <dbReference type="EC" id="2.1.3.15"/>
    </reaction>
</comment>
<comment type="cofactor">
    <cofactor evidence="1">
        <name>Zn(2+)</name>
        <dbReference type="ChEBI" id="CHEBI:29105"/>
    </cofactor>
    <text evidence="1">Binds 1 zinc ion per subunit.</text>
</comment>
<comment type="pathway">
    <text evidence="1">Lipid metabolism; malonyl-CoA biosynthesis; malonyl-CoA from acetyl-CoA: step 1/1.</text>
</comment>
<comment type="subunit">
    <text evidence="1">Acetyl-CoA carboxylase is a heterohexamer composed of biotin carboxyl carrier protein (AccB), biotin carboxylase (AccC) and two subunits each of ACCase subunit alpha (AccA) and ACCase subunit beta (AccD).</text>
</comment>
<comment type="subcellular location">
    <subcellularLocation>
        <location evidence="1">Cytoplasm</location>
    </subcellularLocation>
</comment>
<comment type="similarity">
    <text evidence="1">Belongs to the AccD/PCCB family.</text>
</comment>
<feature type="chain" id="PRO_0000199776" description="Acetyl-coenzyme A carboxylase carboxyl transferase subunit beta">
    <location>
        <begin position="1"/>
        <end position="326"/>
    </location>
</feature>
<feature type="domain" description="CoA carboxyltransferase N-terminal" evidence="2">
    <location>
        <begin position="32"/>
        <end position="301"/>
    </location>
</feature>
<feature type="zinc finger region" description="C4-type" evidence="1">
    <location>
        <begin position="36"/>
        <end position="58"/>
    </location>
</feature>
<feature type="binding site" evidence="1">
    <location>
        <position position="36"/>
    </location>
    <ligand>
        <name>Zn(2+)</name>
        <dbReference type="ChEBI" id="CHEBI:29105"/>
    </ligand>
</feature>
<feature type="binding site" evidence="1">
    <location>
        <position position="39"/>
    </location>
    <ligand>
        <name>Zn(2+)</name>
        <dbReference type="ChEBI" id="CHEBI:29105"/>
    </ligand>
</feature>
<feature type="binding site" evidence="1">
    <location>
        <position position="55"/>
    </location>
    <ligand>
        <name>Zn(2+)</name>
        <dbReference type="ChEBI" id="CHEBI:29105"/>
    </ligand>
</feature>
<feature type="binding site" evidence="1">
    <location>
        <position position="58"/>
    </location>
    <ligand>
        <name>Zn(2+)</name>
        <dbReference type="ChEBI" id="CHEBI:29105"/>
    </ligand>
</feature>
<sequence>MSLFDWFANREKAEPPVLQPQSPQEREVADGLWTKCPACGVLTYTKDLQGNWMVCVECGHHLRVDSDERIRQLIDAKTWQPINEHLRPTDPLKFKDRKSYKDRIRDTQKATDLTDAVQTGHGRLDGLPIALGVMDFRFMGGSMGSVVGEKLCRLIEYATLERLPVVIICASGGARMQEGMLSLMQMAKISGALQNHREQKLLYIPVLTHPTTGGVTASFAMLGDLILAEPKATIGFAGRRVIEQTLREKLPDDFQTSEYLLHHGFVDAIVPRPQLKRTLAQLISLHQPFYPILPPLNADSNQVNPELVLSHTALAVDNQISVNQDG</sequence>